<accession>B2FL97</accession>
<evidence type="ECO:0000255" key="1">
    <source>
        <dbReference type="HAMAP-Rule" id="MF_01970"/>
    </source>
</evidence>
<sequence length="424" mass="46800">MSDLLSRTHAIALDAADPLRPLRNEFLIPRHGGGEQTYFVGNSLGLQPRGAQAAVQEVMKQWGELAVEGHFTGPTQWLSYHRLVSAQLARVVGALPSEVVAMNTLSVNLHLMMVSFYRPTAQRPVILMEAGAFPTDRHAVEAQIRFHGFDPAECLVEVQPDEANGTISLTAIERAIAEHGPRLALVLWPGVQYRTGQAFDLDAITRAARLQGARIGFDLAHSVGNLPLRLHDVAPDFAVWCHYKYLNSGPGAVAGAFVHERHHRDTTLPRFAGWWGHEEATRFQMAPQFTPAIGAEGWQLSNPPILGLAPLRASLDLFERAGMEALRSKSLALTGMLEALVRARLSGVLDIITPAEPQRRGCQLSLRVIGGRERGRALFEHLRGIGVLGDWREPDVIRISPTPLYNRYLDVHHFVEEVEAWAGL</sequence>
<reference key="1">
    <citation type="journal article" date="2008" name="Genome Biol.">
        <title>The complete genome, comparative and functional analysis of Stenotrophomonas maltophilia reveals an organism heavily shielded by drug resistance determinants.</title>
        <authorList>
            <person name="Crossman L.C."/>
            <person name="Gould V.C."/>
            <person name="Dow J.M."/>
            <person name="Vernikos G.S."/>
            <person name="Okazaki A."/>
            <person name="Sebaihia M."/>
            <person name="Saunders D."/>
            <person name="Arrowsmith C."/>
            <person name="Carver T."/>
            <person name="Peters N."/>
            <person name="Adlem E."/>
            <person name="Kerhornou A."/>
            <person name="Lord A."/>
            <person name="Murphy L."/>
            <person name="Seeger K."/>
            <person name="Squares R."/>
            <person name="Rutter S."/>
            <person name="Quail M.A."/>
            <person name="Rajandream M.A."/>
            <person name="Harris D."/>
            <person name="Churcher C."/>
            <person name="Bentley S.D."/>
            <person name="Parkhill J."/>
            <person name="Thomson N.R."/>
            <person name="Avison M.B."/>
        </authorList>
    </citation>
    <scope>NUCLEOTIDE SEQUENCE [LARGE SCALE GENOMIC DNA]</scope>
    <source>
        <strain>K279a</strain>
    </source>
</reference>
<organism>
    <name type="scientific">Stenotrophomonas maltophilia (strain K279a)</name>
    <dbReference type="NCBI Taxonomy" id="522373"/>
    <lineage>
        <taxon>Bacteria</taxon>
        <taxon>Pseudomonadati</taxon>
        <taxon>Pseudomonadota</taxon>
        <taxon>Gammaproteobacteria</taxon>
        <taxon>Lysobacterales</taxon>
        <taxon>Lysobacteraceae</taxon>
        <taxon>Stenotrophomonas</taxon>
        <taxon>Stenotrophomonas maltophilia group</taxon>
    </lineage>
</organism>
<name>KYNU_STRMK</name>
<proteinExistence type="inferred from homology"/>
<keyword id="KW-0378">Hydrolase</keyword>
<keyword id="KW-0662">Pyridine nucleotide biosynthesis</keyword>
<keyword id="KW-0663">Pyridoxal phosphate</keyword>
<keyword id="KW-1185">Reference proteome</keyword>
<dbReference type="EC" id="3.7.1.3" evidence="1"/>
<dbReference type="EMBL" id="AM743169">
    <property type="protein sequence ID" value="CAQ46604.1"/>
    <property type="molecule type" value="Genomic_DNA"/>
</dbReference>
<dbReference type="RefSeq" id="WP_012480764.1">
    <property type="nucleotide sequence ID" value="NC_010943.1"/>
</dbReference>
<dbReference type="SMR" id="B2FL97"/>
<dbReference type="EnsemblBacteria" id="CAQ46604">
    <property type="protein sequence ID" value="CAQ46604"/>
    <property type="gene ID" value="Smlt3160"/>
</dbReference>
<dbReference type="KEGG" id="sml:Smlt3160"/>
<dbReference type="PATRIC" id="fig|522373.3.peg.2956"/>
<dbReference type="eggNOG" id="COG3844">
    <property type="taxonomic scope" value="Bacteria"/>
</dbReference>
<dbReference type="HOGENOM" id="CLU_003433_4_0_6"/>
<dbReference type="UniPathway" id="UPA00253">
    <property type="reaction ID" value="UER00329"/>
</dbReference>
<dbReference type="UniPathway" id="UPA00334">
    <property type="reaction ID" value="UER00455"/>
</dbReference>
<dbReference type="Proteomes" id="UP000008840">
    <property type="component" value="Chromosome"/>
</dbReference>
<dbReference type="GO" id="GO:0005737">
    <property type="term" value="C:cytoplasm"/>
    <property type="evidence" value="ECO:0007669"/>
    <property type="project" value="InterPro"/>
</dbReference>
<dbReference type="GO" id="GO:0030429">
    <property type="term" value="F:kynureninase activity"/>
    <property type="evidence" value="ECO:0007669"/>
    <property type="project" value="UniProtKB-UniRule"/>
</dbReference>
<dbReference type="GO" id="GO:0030170">
    <property type="term" value="F:pyridoxal phosphate binding"/>
    <property type="evidence" value="ECO:0007669"/>
    <property type="project" value="UniProtKB-UniRule"/>
</dbReference>
<dbReference type="GO" id="GO:0043420">
    <property type="term" value="P:anthranilate metabolic process"/>
    <property type="evidence" value="ECO:0007669"/>
    <property type="project" value="TreeGrafter"/>
</dbReference>
<dbReference type="GO" id="GO:0097053">
    <property type="term" value="P:L-kynurenine catabolic process"/>
    <property type="evidence" value="ECO:0007669"/>
    <property type="project" value="UniProtKB-UniRule"/>
</dbReference>
<dbReference type="GO" id="GO:0019441">
    <property type="term" value="P:L-tryptophan catabolic process to kynurenine"/>
    <property type="evidence" value="ECO:0007669"/>
    <property type="project" value="TreeGrafter"/>
</dbReference>
<dbReference type="GO" id="GO:0009435">
    <property type="term" value="P:NAD biosynthetic process"/>
    <property type="evidence" value="ECO:0007669"/>
    <property type="project" value="UniProtKB-UniPathway"/>
</dbReference>
<dbReference type="GO" id="GO:0019805">
    <property type="term" value="P:quinolinate biosynthetic process"/>
    <property type="evidence" value="ECO:0007669"/>
    <property type="project" value="UniProtKB-UniRule"/>
</dbReference>
<dbReference type="FunFam" id="3.40.640.10:FF:000031">
    <property type="entry name" value="Kynureninase"/>
    <property type="match status" value="1"/>
</dbReference>
<dbReference type="Gene3D" id="3.90.1150.10">
    <property type="entry name" value="Aspartate Aminotransferase, domain 1"/>
    <property type="match status" value="1"/>
</dbReference>
<dbReference type="Gene3D" id="3.40.640.10">
    <property type="entry name" value="Type I PLP-dependent aspartate aminotransferase-like (Major domain)"/>
    <property type="match status" value="1"/>
</dbReference>
<dbReference type="HAMAP" id="MF_01970">
    <property type="entry name" value="Kynureninase"/>
    <property type="match status" value="1"/>
</dbReference>
<dbReference type="InterPro" id="IPR010111">
    <property type="entry name" value="Kynureninase"/>
</dbReference>
<dbReference type="InterPro" id="IPR015424">
    <property type="entry name" value="PyrdxlP-dep_Trfase"/>
</dbReference>
<dbReference type="InterPro" id="IPR015421">
    <property type="entry name" value="PyrdxlP-dep_Trfase_major"/>
</dbReference>
<dbReference type="InterPro" id="IPR015422">
    <property type="entry name" value="PyrdxlP-dep_Trfase_small"/>
</dbReference>
<dbReference type="NCBIfam" id="TIGR01814">
    <property type="entry name" value="kynureninase"/>
    <property type="match status" value="1"/>
</dbReference>
<dbReference type="PANTHER" id="PTHR14084">
    <property type="entry name" value="KYNURENINASE"/>
    <property type="match status" value="1"/>
</dbReference>
<dbReference type="PANTHER" id="PTHR14084:SF0">
    <property type="entry name" value="KYNURENINASE"/>
    <property type="match status" value="1"/>
</dbReference>
<dbReference type="Pfam" id="PF22580">
    <property type="entry name" value="KYNU_C"/>
    <property type="match status" value="1"/>
</dbReference>
<dbReference type="PIRSF" id="PIRSF038800">
    <property type="entry name" value="KYNU"/>
    <property type="match status" value="1"/>
</dbReference>
<dbReference type="SUPFAM" id="SSF53383">
    <property type="entry name" value="PLP-dependent transferases"/>
    <property type="match status" value="1"/>
</dbReference>
<protein>
    <recommendedName>
        <fullName evidence="1">Kynureninase</fullName>
        <ecNumber evidence="1">3.7.1.3</ecNumber>
    </recommendedName>
    <alternativeName>
        <fullName evidence="1">L-kynurenine hydrolase</fullName>
    </alternativeName>
</protein>
<feature type="chain" id="PRO_0000357013" description="Kynureninase">
    <location>
        <begin position="1"/>
        <end position="424"/>
    </location>
</feature>
<feature type="binding site" evidence="1">
    <location>
        <position position="105"/>
    </location>
    <ligand>
        <name>pyridoxal 5'-phosphate</name>
        <dbReference type="ChEBI" id="CHEBI:597326"/>
    </ligand>
</feature>
<feature type="binding site" evidence="1">
    <location>
        <position position="106"/>
    </location>
    <ligand>
        <name>pyridoxal 5'-phosphate</name>
        <dbReference type="ChEBI" id="CHEBI:597326"/>
    </ligand>
</feature>
<feature type="binding site" evidence="1">
    <location>
        <begin position="133"/>
        <end position="136"/>
    </location>
    <ligand>
        <name>pyridoxal 5'-phosphate</name>
        <dbReference type="ChEBI" id="CHEBI:597326"/>
    </ligand>
</feature>
<feature type="binding site" evidence="1">
    <location>
        <position position="218"/>
    </location>
    <ligand>
        <name>pyridoxal 5'-phosphate</name>
        <dbReference type="ChEBI" id="CHEBI:597326"/>
    </ligand>
</feature>
<feature type="binding site" evidence="1">
    <location>
        <position position="221"/>
    </location>
    <ligand>
        <name>pyridoxal 5'-phosphate</name>
        <dbReference type="ChEBI" id="CHEBI:597326"/>
    </ligand>
</feature>
<feature type="binding site" evidence="1">
    <location>
        <position position="243"/>
    </location>
    <ligand>
        <name>pyridoxal 5'-phosphate</name>
        <dbReference type="ChEBI" id="CHEBI:597326"/>
    </ligand>
</feature>
<feature type="binding site" evidence="1">
    <location>
        <position position="274"/>
    </location>
    <ligand>
        <name>pyridoxal 5'-phosphate</name>
        <dbReference type="ChEBI" id="CHEBI:597326"/>
    </ligand>
</feature>
<feature type="binding site" evidence="1">
    <location>
        <position position="302"/>
    </location>
    <ligand>
        <name>pyridoxal 5'-phosphate</name>
        <dbReference type="ChEBI" id="CHEBI:597326"/>
    </ligand>
</feature>
<feature type="modified residue" description="N6-(pyridoxal phosphate)lysine" evidence="1">
    <location>
        <position position="244"/>
    </location>
</feature>
<comment type="function">
    <text evidence="1">Catalyzes the cleavage of L-kynurenine (L-Kyn) and L-3-hydroxykynurenine (L-3OHKyn) into anthranilic acid (AA) and 3-hydroxyanthranilic acid (3-OHAA), respectively.</text>
</comment>
<comment type="catalytic activity">
    <reaction evidence="1">
        <text>L-kynurenine + H2O = anthranilate + L-alanine + H(+)</text>
        <dbReference type="Rhea" id="RHEA:16813"/>
        <dbReference type="ChEBI" id="CHEBI:15377"/>
        <dbReference type="ChEBI" id="CHEBI:15378"/>
        <dbReference type="ChEBI" id="CHEBI:16567"/>
        <dbReference type="ChEBI" id="CHEBI:57959"/>
        <dbReference type="ChEBI" id="CHEBI:57972"/>
        <dbReference type="EC" id="3.7.1.3"/>
    </reaction>
</comment>
<comment type="catalytic activity">
    <reaction evidence="1">
        <text>3-hydroxy-L-kynurenine + H2O = 3-hydroxyanthranilate + L-alanine + H(+)</text>
        <dbReference type="Rhea" id="RHEA:25143"/>
        <dbReference type="ChEBI" id="CHEBI:15377"/>
        <dbReference type="ChEBI" id="CHEBI:15378"/>
        <dbReference type="ChEBI" id="CHEBI:36559"/>
        <dbReference type="ChEBI" id="CHEBI:57972"/>
        <dbReference type="ChEBI" id="CHEBI:58125"/>
        <dbReference type="EC" id="3.7.1.3"/>
    </reaction>
</comment>
<comment type="cofactor">
    <cofactor evidence="1">
        <name>pyridoxal 5'-phosphate</name>
        <dbReference type="ChEBI" id="CHEBI:597326"/>
    </cofactor>
</comment>
<comment type="pathway">
    <text evidence="1">Amino-acid degradation; L-kynurenine degradation; L-alanine and anthranilate from L-kynurenine: step 1/1.</text>
</comment>
<comment type="pathway">
    <text evidence="1">Cofactor biosynthesis; NAD(+) biosynthesis; quinolinate from L-kynurenine: step 2/3.</text>
</comment>
<comment type="subunit">
    <text evidence="1">Homodimer.</text>
</comment>
<comment type="similarity">
    <text evidence="1">Belongs to the kynureninase family.</text>
</comment>
<gene>
    <name evidence="1" type="primary">kynU</name>
    <name type="ordered locus">Smlt3160</name>
</gene>